<sequence length="306" mass="34132">VRATEKFASMYFFCHSPQSAETDVAERGNKRPVWIMGHMVNAIAQIDEFVNLGANSIETDVSFDSSANPEYTYHGVPCDCGRTCTKWEHFNEFLKGLRKATTPGDSKYHEKLVLVVFDLKTGRLYDNQASDAGKKLAKSLLQNYWNNGNNGGRAYIVLSIPNLAHYKLIAGFKEALTSEGHPELMDKVGYDFSGNDDIGDVANAYKKAGVTGHVWQSDGITNCLLRGLDRVGKAVANRDSSNGYINKVYYWTVDKRQSTRDALDAGVDGIMTNYPDVIADVLNESAYKAKFRIASYDDNPWETYKN</sequence>
<dbReference type="EC" id="4.6.1.-" evidence="5"/>
<dbReference type="EMBL" id="AY699704">
    <property type="protein sequence ID" value="AAW22998.1"/>
    <property type="molecule type" value="mRNA"/>
</dbReference>
<dbReference type="SMR" id="Q4ZFU1"/>
<dbReference type="ArachnoServer" id="AS000142">
    <property type="toxin name" value="SicTox-LazalphaIB1ai"/>
</dbReference>
<dbReference type="GO" id="GO:0005576">
    <property type="term" value="C:extracellular region"/>
    <property type="evidence" value="ECO:0007669"/>
    <property type="project" value="UniProtKB-SubCell"/>
</dbReference>
<dbReference type="GO" id="GO:0016829">
    <property type="term" value="F:lyase activity"/>
    <property type="evidence" value="ECO:0007669"/>
    <property type="project" value="UniProtKB-KW"/>
</dbReference>
<dbReference type="GO" id="GO:0046872">
    <property type="term" value="F:metal ion binding"/>
    <property type="evidence" value="ECO:0007669"/>
    <property type="project" value="UniProtKB-KW"/>
</dbReference>
<dbReference type="GO" id="GO:0008081">
    <property type="term" value="F:phosphoric diester hydrolase activity"/>
    <property type="evidence" value="ECO:0007669"/>
    <property type="project" value="InterPro"/>
</dbReference>
<dbReference type="GO" id="GO:0090729">
    <property type="term" value="F:toxin activity"/>
    <property type="evidence" value="ECO:0007669"/>
    <property type="project" value="UniProtKB-KW"/>
</dbReference>
<dbReference type="GO" id="GO:0031640">
    <property type="term" value="P:killing of cells of another organism"/>
    <property type="evidence" value="ECO:0007669"/>
    <property type="project" value="UniProtKB-KW"/>
</dbReference>
<dbReference type="GO" id="GO:0016042">
    <property type="term" value="P:lipid catabolic process"/>
    <property type="evidence" value="ECO:0007669"/>
    <property type="project" value="UniProtKB-KW"/>
</dbReference>
<dbReference type="CDD" id="cd08576">
    <property type="entry name" value="GDPD_like_SMaseD_PLD"/>
    <property type="match status" value="1"/>
</dbReference>
<dbReference type="Gene3D" id="3.20.20.190">
    <property type="entry name" value="Phosphatidylinositol (PI) phosphodiesterase"/>
    <property type="match status" value="1"/>
</dbReference>
<dbReference type="InterPro" id="IPR017946">
    <property type="entry name" value="PLC-like_Pdiesterase_TIM-brl"/>
</dbReference>
<dbReference type="Pfam" id="PF13653">
    <property type="entry name" value="GDPD_2"/>
    <property type="match status" value="1"/>
</dbReference>
<dbReference type="SUPFAM" id="SSF51695">
    <property type="entry name" value="PLC-like phosphodiesterases"/>
    <property type="match status" value="1"/>
</dbReference>
<evidence type="ECO:0000250" key="1"/>
<evidence type="ECO:0000250" key="2">
    <source>
        <dbReference type="UniProtKB" id="A0A0D4WTV1"/>
    </source>
</evidence>
<evidence type="ECO:0000250" key="3">
    <source>
        <dbReference type="UniProtKB" id="A0A0D4WV12"/>
    </source>
</evidence>
<evidence type="ECO:0000250" key="4">
    <source>
        <dbReference type="UniProtKB" id="P0CE80"/>
    </source>
</evidence>
<evidence type="ECO:0000250" key="5">
    <source>
        <dbReference type="UniProtKB" id="Q4ZFU2"/>
    </source>
</evidence>
<evidence type="ECO:0000250" key="6">
    <source>
        <dbReference type="UniProtKB" id="Q8I914"/>
    </source>
</evidence>
<evidence type="ECO:0000255" key="7"/>
<evidence type="ECO:0000305" key="8"/>
<evidence type="ECO:0000305" key="9">
    <source>
    </source>
</evidence>
<keyword id="KW-0204">Cytolysis</keyword>
<keyword id="KW-1061">Dermonecrotic toxin</keyword>
<keyword id="KW-1015">Disulfide bond</keyword>
<keyword id="KW-0325">Glycoprotein</keyword>
<keyword id="KW-0354">Hemolysis</keyword>
<keyword id="KW-0442">Lipid degradation</keyword>
<keyword id="KW-0443">Lipid metabolism</keyword>
<keyword id="KW-0456">Lyase</keyword>
<keyword id="KW-0460">Magnesium</keyword>
<keyword id="KW-0479">Metal-binding</keyword>
<keyword id="KW-0964">Secreted</keyword>
<keyword id="KW-0732">Signal</keyword>
<keyword id="KW-0800">Toxin</keyword>
<keyword id="KW-0865">Zymogen</keyword>
<feature type="signal peptide" evidence="7">
    <location>
        <begin position="1" status="less than"/>
        <end position="1"/>
    </location>
</feature>
<feature type="propeptide" id="PRO_0000279551" evidence="1">
    <location>
        <begin position="2"/>
        <end position="27"/>
    </location>
</feature>
<feature type="chain" id="PRO_0000279552" description="Dermonecrotic toxin LarSicTox-alphaIB1ai">
    <location>
        <begin position="28"/>
        <end position="306"/>
    </location>
</feature>
<feature type="active site" evidence="6">
    <location>
        <position position="38"/>
    </location>
</feature>
<feature type="active site" description="Nucleophile" evidence="6">
    <location>
        <position position="74"/>
    </location>
</feature>
<feature type="binding site" evidence="6">
    <location>
        <position position="58"/>
    </location>
    <ligand>
        <name>Mg(2+)</name>
        <dbReference type="ChEBI" id="CHEBI:18420"/>
    </ligand>
</feature>
<feature type="binding site" evidence="6">
    <location>
        <position position="60"/>
    </location>
    <ligand>
        <name>Mg(2+)</name>
        <dbReference type="ChEBI" id="CHEBI:18420"/>
    </ligand>
</feature>
<feature type="binding site" evidence="6">
    <location>
        <position position="118"/>
    </location>
    <ligand>
        <name>Mg(2+)</name>
        <dbReference type="ChEBI" id="CHEBI:18420"/>
    </ligand>
</feature>
<feature type="glycosylation site" description="N-linked (GlcNAc...) asparagine" evidence="7">
    <location>
        <position position="283"/>
    </location>
</feature>
<feature type="disulfide bond" evidence="4">
    <location>
        <begin position="78"/>
        <end position="84"/>
    </location>
</feature>
<feature type="disulfide bond" evidence="4">
    <location>
        <begin position="80"/>
        <end position="223"/>
    </location>
</feature>
<feature type="non-terminal residue">
    <location>
        <position position="1"/>
    </location>
</feature>
<reference key="1">
    <citation type="journal article" date="2005" name="Toxicon">
        <title>Sphingomyelinase D from venoms of Loxosceles spiders: evolutionary insights from cDNA sequences and gene structure.</title>
        <authorList>
            <person name="Binford G.J."/>
            <person name="Cordes M.H.J."/>
            <person name="Wells M.A."/>
        </authorList>
    </citation>
    <scope>NUCLEOTIDE SEQUENCE [MRNA]</scope>
</reference>
<organism>
    <name type="scientific">Loxosceles arizonica</name>
    <name type="common">Arizona brown spider</name>
    <dbReference type="NCBI Taxonomy" id="196454"/>
    <lineage>
        <taxon>Eukaryota</taxon>
        <taxon>Metazoa</taxon>
        <taxon>Ecdysozoa</taxon>
        <taxon>Arthropoda</taxon>
        <taxon>Chelicerata</taxon>
        <taxon>Arachnida</taxon>
        <taxon>Araneae</taxon>
        <taxon>Araneomorphae</taxon>
        <taxon>Haplogynae</taxon>
        <taxon>Scytodoidea</taxon>
        <taxon>Sicariidae</taxon>
        <taxon>Loxosceles</taxon>
    </lineage>
</organism>
<name>A1KA1_LOXAR</name>
<comment type="function">
    <text evidence="2 4">Dermonecrotic toxins cleave the phosphodiester linkage between the phosphate and headgroup of certain phospholipids (sphingolipid and lysolipid substrates), forming an alcohol (often choline) and a cyclic phosphate (By similarity). This toxin acts on sphingomyelin (SM) (By similarity). It may also act on ceramide phosphoethanolamine (CPE), lysophosphatidylcholine (LPC) and lysophosphatidylethanolamine (LPE), but not on lysophosphatidylserine (LPS), and lysophosphatidylglycerol (LPG) (By similarity). It acts by transphosphatidylation, releasing exclusively cyclic phosphate products as second products (By similarity). Induces dermonecrosis, hemolysis, increased vascular permeability, edema, inflammatory response, and platelet aggregation (By similarity).</text>
</comment>
<comment type="catalytic activity">
    <reaction evidence="2">
        <text>an N-(acyl)-sphingosylphosphocholine = an N-(acyl)-sphingosyl-1,3-cyclic phosphate + choline</text>
        <dbReference type="Rhea" id="RHEA:60652"/>
        <dbReference type="ChEBI" id="CHEBI:15354"/>
        <dbReference type="ChEBI" id="CHEBI:64583"/>
        <dbReference type="ChEBI" id="CHEBI:143892"/>
    </reaction>
</comment>
<comment type="catalytic activity">
    <reaction evidence="2">
        <text>an N-(acyl)-sphingosylphosphoethanolamine = an N-(acyl)-sphingosyl-1,3-cyclic phosphate + ethanolamine</text>
        <dbReference type="Rhea" id="RHEA:60648"/>
        <dbReference type="ChEBI" id="CHEBI:57603"/>
        <dbReference type="ChEBI" id="CHEBI:143891"/>
        <dbReference type="ChEBI" id="CHEBI:143892"/>
    </reaction>
</comment>
<comment type="catalytic activity">
    <reaction evidence="2">
        <text>a 1-acyl-sn-glycero-3-phosphocholine = a 1-acyl-sn-glycero-2,3-cyclic phosphate + choline</text>
        <dbReference type="Rhea" id="RHEA:60700"/>
        <dbReference type="ChEBI" id="CHEBI:15354"/>
        <dbReference type="ChEBI" id="CHEBI:58168"/>
        <dbReference type="ChEBI" id="CHEBI:143947"/>
    </reaction>
</comment>
<comment type="catalytic activity">
    <reaction evidence="2">
        <text>a 1-acyl-sn-glycero-3-phosphoethanolamine = a 1-acyl-sn-glycero-2,3-cyclic phosphate + ethanolamine</text>
        <dbReference type="Rhea" id="RHEA:60704"/>
        <dbReference type="ChEBI" id="CHEBI:57603"/>
        <dbReference type="ChEBI" id="CHEBI:64381"/>
        <dbReference type="ChEBI" id="CHEBI:143947"/>
    </reaction>
</comment>
<comment type="cofactor">
    <cofactor evidence="6">
        <name>Mg(2+)</name>
        <dbReference type="ChEBI" id="CHEBI:18420"/>
    </cofactor>
    <text evidence="6">Binds 1 Mg(2+) ion per subunit.</text>
</comment>
<comment type="subcellular location">
    <subcellularLocation>
        <location evidence="9">Secreted</location>
    </subcellularLocation>
</comment>
<comment type="tissue specificity">
    <text evidence="9">Expressed by the venom gland.</text>
</comment>
<comment type="similarity">
    <text evidence="8">Belongs to the arthropod phospholipase D family. Class II subfamily.</text>
</comment>
<comment type="caution">
    <text evidence="2 3 5">The most common activity assay for dermonecrotic toxins detects enzymatic activity by monitoring choline release from substrate. Liberation of choline from sphingomyelin (SM) or lysophosphatidylcholine (LPC) is commonly assumed to result from substrate hydrolysis, giving either ceramide-1-phosphate (C1P) or lysophosphatidic acid (LPA), respectively, as a second product. However, two studies from Lajoie and colleagues (2013 and 2015) report the observation of exclusive formation of cyclic phosphate products as second products, resulting from intramolecular transphosphatidylation. Cyclic phosphates have vastly different biological properties from their monoester counterparts, and they may be relevant to the pathology of brown spider envenomation.</text>
</comment>
<accession>Q4ZFU1</accession>
<protein>
    <recommendedName>
        <fullName>Dermonecrotic toxin LarSicTox-alphaIB1ai</fullName>
        <ecNumber evidence="5">4.6.1.-</ecNumber>
    </recommendedName>
    <alternativeName>
        <fullName>Phospholipase D</fullName>
        <shortName>PLD</shortName>
    </alternativeName>
    <alternativeName>
        <fullName>Sphingomyelin phosphodiesterase D 3</fullName>
        <shortName>SMD 3</shortName>
        <shortName>SMase D 3</shortName>
        <shortName>Sphingomyelinase D 3</shortName>
    </alternativeName>
</protein>
<proteinExistence type="evidence at transcript level"/>